<dbReference type="EC" id="3.4.14.1"/>
<dbReference type="EMBL" id="BC102115">
    <property type="protein sequence ID" value="AAI02116.1"/>
    <property type="molecule type" value="mRNA"/>
</dbReference>
<dbReference type="RefSeq" id="NP_001028789.1">
    <property type="nucleotide sequence ID" value="NM_001033617.2"/>
</dbReference>
<dbReference type="SMR" id="Q3ZCJ8"/>
<dbReference type="FunCoup" id="Q3ZCJ8">
    <property type="interactions" value="641"/>
</dbReference>
<dbReference type="STRING" id="9913.ENSBTAP00000014735"/>
<dbReference type="BindingDB" id="Q3ZCJ8"/>
<dbReference type="ChEMBL" id="CHEMBL1075050"/>
<dbReference type="MEROPS" id="C01.070"/>
<dbReference type="GlyCosmos" id="Q3ZCJ8">
    <property type="glycosylation" value="4 sites, No reported glycans"/>
</dbReference>
<dbReference type="GlyGen" id="Q3ZCJ8">
    <property type="glycosylation" value="4 sites"/>
</dbReference>
<dbReference type="PaxDb" id="9913-ENSBTAP00000014735"/>
<dbReference type="PeptideAtlas" id="Q3ZCJ8"/>
<dbReference type="GeneID" id="352958"/>
<dbReference type="KEGG" id="bta:352958"/>
<dbReference type="CTD" id="1075"/>
<dbReference type="eggNOG" id="KOG1543">
    <property type="taxonomic scope" value="Eukaryota"/>
</dbReference>
<dbReference type="InParanoid" id="Q3ZCJ8"/>
<dbReference type="OrthoDB" id="3789175at2759"/>
<dbReference type="BRENDA" id="3.4.14.1">
    <property type="organism ID" value="908"/>
</dbReference>
<dbReference type="PRO" id="PR:Q3ZCJ8"/>
<dbReference type="Proteomes" id="UP000009136">
    <property type="component" value="Unplaced"/>
</dbReference>
<dbReference type="GO" id="GO:0005615">
    <property type="term" value="C:extracellular space"/>
    <property type="evidence" value="ECO:0000318"/>
    <property type="project" value="GO_Central"/>
</dbReference>
<dbReference type="GO" id="GO:0005764">
    <property type="term" value="C:lysosome"/>
    <property type="evidence" value="ECO:0000318"/>
    <property type="project" value="GO_Central"/>
</dbReference>
<dbReference type="GO" id="GO:0004197">
    <property type="term" value="F:cysteine-type endopeptidase activity"/>
    <property type="evidence" value="ECO:0000318"/>
    <property type="project" value="GO_Central"/>
</dbReference>
<dbReference type="GO" id="GO:0008239">
    <property type="term" value="F:dipeptidyl-peptidase activity"/>
    <property type="evidence" value="ECO:0007669"/>
    <property type="project" value="UniProtKB-EC"/>
</dbReference>
<dbReference type="GO" id="GO:0051603">
    <property type="term" value="P:proteolysis involved in protein catabolic process"/>
    <property type="evidence" value="ECO:0000318"/>
    <property type="project" value="GO_Central"/>
</dbReference>
<dbReference type="GO" id="GO:0031638">
    <property type="term" value="P:zymogen activation"/>
    <property type="evidence" value="ECO:0000314"/>
    <property type="project" value="UniProtKB"/>
</dbReference>
<dbReference type="CDD" id="cd02621">
    <property type="entry name" value="Peptidase_C1A_CathepsinC"/>
    <property type="match status" value="1"/>
</dbReference>
<dbReference type="FunFam" id="2.40.128.80:FF:000001">
    <property type="entry name" value="Dipeptidyl peptidase 1"/>
    <property type="match status" value="1"/>
</dbReference>
<dbReference type="FunFam" id="3.90.70.10:FF:000062">
    <property type="entry name" value="Dipeptidyl peptidase 1"/>
    <property type="match status" value="1"/>
</dbReference>
<dbReference type="Gene3D" id="2.40.128.80">
    <property type="entry name" value="Cathepsin C, exclusion domain"/>
    <property type="match status" value="1"/>
</dbReference>
<dbReference type="Gene3D" id="3.90.70.10">
    <property type="entry name" value="Cysteine proteinases"/>
    <property type="match status" value="1"/>
</dbReference>
<dbReference type="InterPro" id="IPR039412">
    <property type="entry name" value="CatC"/>
</dbReference>
<dbReference type="InterPro" id="IPR014882">
    <property type="entry name" value="CathepsinC_exc"/>
</dbReference>
<dbReference type="InterPro" id="IPR036496">
    <property type="entry name" value="CathepsinC_exc_dom_sf"/>
</dbReference>
<dbReference type="InterPro" id="IPR038765">
    <property type="entry name" value="Papain-like_cys_pep_sf"/>
</dbReference>
<dbReference type="InterPro" id="IPR025661">
    <property type="entry name" value="Pept_asp_AS"/>
</dbReference>
<dbReference type="InterPro" id="IPR000169">
    <property type="entry name" value="Pept_cys_AS"/>
</dbReference>
<dbReference type="InterPro" id="IPR025660">
    <property type="entry name" value="Pept_his_AS"/>
</dbReference>
<dbReference type="InterPro" id="IPR013128">
    <property type="entry name" value="Peptidase_C1A"/>
</dbReference>
<dbReference type="InterPro" id="IPR000668">
    <property type="entry name" value="Peptidase_C1A_C"/>
</dbReference>
<dbReference type="PANTHER" id="PTHR12411">
    <property type="entry name" value="CYSTEINE PROTEASE FAMILY C1-RELATED"/>
    <property type="match status" value="1"/>
</dbReference>
<dbReference type="Pfam" id="PF08773">
    <property type="entry name" value="CathepsinC_exc"/>
    <property type="match status" value="1"/>
</dbReference>
<dbReference type="Pfam" id="PF00112">
    <property type="entry name" value="Peptidase_C1"/>
    <property type="match status" value="1"/>
</dbReference>
<dbReference type="PRINTS" id="PR00705">
    <property type="entry name" value="PAPAIN"/>
</dbReference>
<dbReference type="SMART" id="SM00645">
    <property type="entry name" value="Pept_C1"/>
    <property type="match status" value="1"/>
</dbReference>
<dbReference type="SUPFAM" id="SSF54001">
    <property type="entry name" value="Cysteine proteinases"/>
    <property type="match status" value="1"/>
</dbReference>
<dbReference type="SUPFAM" id="SSF75001">
    <property type="entry name" value="Dipeptidyl peptidase I (cathepsin C), exclusion domain"/>
    <property type="match status" value="1"/>
</dbReference>
<dbReference type="PROSITE" id="PS00640">
    <property type="entry name" value="THIOL_PROTEASE_ASN"/>
    <property type="match status" value="1"/>
</dbReference>
<dbReference type="PROSITE" id="PS00139">
    <property type="entry name" value="THIOL_PROTEASE_CYS"/>
    <property type="match status" value="1"/>
</dbReference>
<dbReference type="PROSITE" id="PS00639">
    <property type="entry name" value="THIOL_PROTEASE_HIS"/>
    <property type="match status" value="1"/>
</dbReference>
<reference key="1">
    <citation type="submission" date="2005-08" db="EMBL/GenBank/DDBJ databases">
        <authorList>
            <consortium name="NIH - Mammalian Gene Collection (MGC) project"/>
        </authorList>
    </citation>
    <scope>NUCLEOTIDE SEQUENCE [LARGE SCALE MRNA]</scope>
    <source>
        <strain>Crossbred X Angus</strain>
        <tissue>Ileum</tissue>
    </source>
</reference>
<keyword id="KW-0868">Chloride</keyword>
<keyword id="KW-1015">Disulfide bond</keyword>
<keyword id="KW-0325">Glycoprotein</keyword>
<keyword id="KW-0378">Hydrolase</keyword>
<keyword id="KW-0458">Lysosome</keyword>
<keyword id="KW-0645">Protease</keyword>
<keyword id="KW-1185">Reference proteome</keyword>
<keyword id="KW-0732">Signal</keyword>
<keyword id="KW-0788">Thiol protease</keyword>
<keyword id="KW-0865">Zymogen</keyword>
<feature type="signal peptide" evidence="1">
    <location>
        <begin position="1"/>
        <end position="24"/>
    </location>
</feature>
<feature type="chain" id="PRO_0000238121" description="Dipeptidyl peptidase 1 exclusion domain chain">
    <location>
        <begin position="25"/>
        <end position="134"/>
    </location>
</feature>
<feature type="propeptide" id="PRO_0000238122" evidence="1">
    <location>
        <begin position="135"/>
        <end position="230"/>
    </location>
</feature>
<feature type="chain" id="PRO_0000238123" description="Dipeptidyl peptidase 1 heavy chain" evidence="1">
    <location>
        <begin position="231"/>
        <end position="394"/>
    </location>
</feature>
<feature type="chain" id="PRO_0000238124" description="Dipeptidyl peptidase 1 light chain" evidence="1">
    <location>
        <begin position="395"/>
        <end position="463"/>
    </location>
</feature>
<feature type="active site" evidence="3">
    <location>
        <position position="258"/>
    </location>
</feature>
<feature type="active site" evidence="4">
    <location>
        <position position="405"/>
    </location>
</feature>
<feature type="active site" evidence="5">
    <location>
        <position position="427"/>
    </location>
</feature>
<feature type="binding site" evidence="1">
    <location>
        <position position="302"/>
    </location>
    <ligand>
        <name>chloride</name>
        <dbReference type="ChEBI" id="CHEBI:17996"/>
    </ligand>
</feature>
<feature type="binding site" evidence="1">
    <location>
        <position position="304"/>
    </location>
    <ligand>
        <name>chloride</name>
        <dbReference type="ChEBI" id="CHEBI:17996"/>
    </ligand>
</feature>
<feature type="binding site" evidence="1">
    <location>
        <position position="347"/>
    </location>
    <ligand>
        <name>chloride</name>
        <dbReference type="ChEBI" id="CHEBI:17996"/>
    </ligand>
</feature>
<feature type="glycosylation site" description="N-linked (GlcNAc...) asparagine" evidence="2">
    <location>
        <position position="29"/>
    </location>
</feature>
<feature type="glycosylation site" description="N-linked (GlcNAc...) asparagine" evidence="2">
    <location>
        <position position="53"/>
    </location>
</feature>
<feature type="glycosylation site" description="N-linked (GlcNAc...) asparagine" evidence="2">
    <location>
        <position position="144"/>
    </location>
</feature>
<feature type="glycosylation site" description="N-linked (GlcNAc...) asparagine" evidence="2">
    <location>
        <position position="276"/>
    </location>
</feature>
<feature type="disulfide bond" evidence="1">
    <location>
        <begin position="30"/>
        <end position="118"/>
    </location>
</feature>
<feature type="disulfide bond" evidence="1">
    <location>
        <begin position="54"/>
        <end position="136"/>
    </location>
</feature>
<feature type="disulfide bond" evidence="1">
    <location>
        <begin position="255"/>
        <end position="298"/>
    </location>
</feature>
<feature type="disulfide bond" evidence="1">
    <location>
        <begin position="291"/>
        <end position="331"/>
    </location>
</feature>
<feature type="disulfide bond" evidence="1">
    <location>
        <begin position="321"/>
        <end position="337"/>
    </location>
</feature>
<proteinExistence type="evidence at transcript level"/>
<comment type="function">
    <text evidence="1">Thiol protease. Has dipeptidylpeptidase activity. Active against a broad range of dipeptide substrates composed of both polar and hydrophobic amino acids. Proline cannot occupy the P1 position and arginine cannot occupy the P2 position of the substrate. Can act as both an exopeptidase and endopeptidase. Activates serine proteases such as elastase, cathepsin G and granzymes A and B.</text>
</comment>
<comment type="catalytic activity">
    <reaction evidence="1">
        <text>Release of an N-terminal dipeptide, Xaa-Yaa-|-Zaa-, except when Xaa is Arg or Lys, or Yaa or Zaa is Pro.</text>
        <dbReference type="EC" id="3.4.14.1"/>
    </reaction>
</comment>
<comment type="cofactor">
    <cofactor evidence="1">
        <name>chloride</name>
        <dbReference type="ChEBI" id="CHEBI:17996"/>
    </cofactor>
    <text evidence="1">Binds 1 Cl(-) ion per heavy chain.</text>
</comment>
<comment type="subunit">
    <text evidence="1">Tetramer of heterotrimers consisting of exclusion domain, heavy- and light chains.</text>
</comment>
<comment type="subcellular location">
    <subcellularLocation>
        <location evidence="1">Lysosome</location>
    </subcellularLocation>
</comment>
<comment type="similarity">
    <text evidence="3 4 5">Belongs to the peptidase C1 family.</text>
</comment>
<organism>
    <name type="scientific">Bos taurus</name>
    <name type="common">Bovine</name>
    <dbReference type="NCBI Taxonomy" id="9913"/>
    <lineage>
        <taxon>Eukaryota</taxon>
        <taxon>Metazoa</taxon>
        <taxon>Chordata</taxon>
        <taxon>Craniata</taxon>
        <taxon>Vertebrata</taxon>
        <taxon>Euteleostomi</taxon>
        <taxon>Mammalia</taxon>
        <taxon>Eutheria</taxon>
        <taxon>Laurasiatheria</taxon>
        <taxon>Artiodactyla</taxon>
        <taxon>Ruminantia</taxon>
        <taxon>Pecora</taxon>
        <taxon>Bovidae</taxon>
        <taxon>Bovinae</taxon>
        <taxon>Bos</taxon>
    </lineage>
</organism>
<accession>Q3ZCJ8</accession>
<gene>
    <name type="primary">CTSC</name>
</gene>
<sequence>MGPWSGSRLVALLLLVYGAGSVRGDTPANCTYPDLLGTWVFQVGSSGSQRDVNCSVMGPPEKKVVVHLKKLDTAYDDFGNSGHFTIIYNQGFEIVLNDYKWFAFFKYKEEGGKVTSYCHETMTGWVHDVLGRNRACFTGRKTGNTSENVNVNTARLAGLEETYSNRLYRYNHDFVKAINAIQKSWTAAPYMEYETLTLKEMIRRGGGHSRRIPRPKPAPITAEIQKKILHLPTSWDWRNVHGINFVTPVRNQGSCGSCYSFASMGMMEARIRILTNNTQTPILSPQEVVSCSQYAQGCEGGFPYLIAGKYAQDFGLVEEDCFPYTGTDSPCRLKEGCFRYYSSEYHYVGGFYGGCNEALMKLELVHQGPMAVAFEVYDDFLHYRKGVYHHTGLRDPFNPFELTNHAVLLVGYGTDAASGLDYWIVKNSWGTSWGENGYFRIRRGTDECAIESIALAATPIPKL</sequence>
<protein>
    <recommendedName>
        <fullName>Dipeptidyl peptidase 1</fullName>
        <ecNumber>3.4.14.1</ecNumber>
    </recommendedName>
    <alternativeName>
        <fullName>Cathepsin C</fullName>
    </alternativeName>
    <alternativeName>
        <fullName>Cathepsin J</fullName>
    </alternativeName>
    <alternativeName>
        <fullName>Dipeptidyl peptidase I</fullName>
        <shortName>DPP-I</shortName>
        <shortName>DPPI</shortName>
    </alternativeName>
    <alternativeName>
        <fullName>Dipeptidyl transferase</fullName>
    </alternativeName>
    <component>
        <recommendedName>
            <fullName>Dipeptidyl peptidase 1 exclusion domain chain</fullName>
        </recommendedName>
        <alternativeName>
            <fullName>Dipeptidyl peptidase I exclusion domain chain</fullName>
        </alternativeName>
    </component>
    <component>
        <recommendedName>
            <fullName>Dipeptidyl peptidase 1 heavy chain</fullName>
        </recommendedName>
        <alternativeName>
            <fullName>Dipeptidyl peptidase I heavy chain</fullName>
        </alternativeName>
    </component>
    <component>
        <recommendedName>
            <fullName>Dipeptidyl peptidase 1 light chain</fullName>
        </recommendedName>
        <alternativeName>
            <fullName>Dipeptidyl peptidase I light chain</fullName>
        </alternativeName>
    </component>
</protein>
<evidence type="ECO:0000250" key="1">
    <source>
        <dbReference type="UniProtKB" id="P53634"/>
    </source>
</evidence>
<evidence type="ECO:0000255" key="2"/>
<evidence type="ECO:0000255" key="3">
    <source>
        <dbReference type="PROSITE-ProRule" id="PRU10088"/>
    </source>
</evidence>
<evidence type="ECO:0000255" key="4">
    <source>
        <dbReference type="PROSITE-ProRule" id="PRU10089"/>
    </source>
</evidence>
<evidence type="ECO:0000255" key="5">
    <source>
        <dbReference type="PROSITE-ProRule" id="PRU10090"/>
    </source>
</evidence>
<name>CATC_BOVIN</name>